<dbReference type="EC" id="5.4.99.-"/>
<dbReference type="EMBL" id="AE000516">
    <property type="protein sequence ID" value="AAK46022.1"/>
    <property type="molecule type" value="Genomic_DNA"/>
</dbReference>
<dbReference type="PIR" id="F70504">
    <property type="entry name" value="F70504"/>
</dbReference>
<dbReference type="RefSeq" id="WP_003408439.1">
    <property type="nucleotide sequence ID" value="NZ_KK341227.1"/>
</dbReference>
<dbReference type="SMR" id="P9WHQ0"/>
<dbReference type="KEGG" id="mtc:MT1751.1"/>
<dbReference type="PATRIC" id="fig|83331.31.peg.1880"/>
<dbReference type="HOGENOM" id="CLU_024979_1_2_11"/>
<dbReference type="Proteomes" id="UP000001020">
    <property type="component" value="Chromosome"/>
</dbReference>
<dbReference type="GO" id="GO:0003723">
    <property type="term" value="F:RNA binding"/>
    <property type="evidence" value="ECO:0007669"/>
    <property type="project" value="UniProtKB-KW"/>
</dbReference>
<dbReference type="GO" id="GO:0120159">
    <property type="term" value="F:rRNA pseudouridine synthase activity"/>
    <property type="evidence" value="ECO:0007669"/>
    <property type="project" value="UniProtKB-ARBA"/>
</dbReference>
<dbReference type="GO" id="GO:0000455">
    <property type="term" value="P:enzyme-directed rRNA pseudouridine synthesis"/>
    <property type="evidence" value="ECO:0007669"/>
    <property type="project" value="UniProtKB-ARBA"/>
</dbReference>
<dbReference type="CDD" id="cd02870">
    <property type="entry name" value="PseudoU_synth_RsuA_like"/>
    <property type="match status" value="1"/>
</dbReference>
<dbReference type="CDD" id="cd00165">
    <property type="entry name" value="S4"/>
    <property type="match status" value="1"/>
</dbReference>
<dbReference type="FunFam" id="3.10.290.10:FF:000003">
    <property type="entry name" value="Pseudouridine synthase"/>
    <property type="match status" value="1"/>
</dbReference>
<dbReference type="Gene3D" id="3.30.70.1560">
    <property type="entry name" value="Alpha-L RNA-binding motif"/>
    <property type="match status" value="1"/>
</dbReference>
<dbReference type="Gene3D" id="3.30.70.580">
    <property type="entry name" value="Pseudouridine synthase I, catalytic domain, N-terminal subdomain"/>
    <property type="match status" value="1"/>
</dbReference>
<dbReference type="Gene3D" id="3.10.290.10">
    <property type="entry name" value="RNA-binding S4 domain"/>
    <property type="match status" value="1"/>
</dbReference>
<dbReference type="InterPro" id="IPR042092">
    <property type="entry name" value="PsdUridine_s_RsuA/RluB/E/F_cat"/>
</dbReference>
<dbReference type="InterPro" id="IPR020103">
    <property type="entry name" value="PsdUridine_synth_cat_dom_sf"/>
</dbReference>
<dbReference type="InterPro" id="IPR006145">
    <property type="entry name" value="PsdUridine_synth_RsuA/RluA"/>
</dbReference>
<dbReference type="InterPro" id="IPR000748">
    <property type="entry name" value="PsdUridine_synth_RsuA/RluB/E/F"/>
</dbReference>
<dbReference type="InterPro" id="IPR018496">
    <property type="entry name" value="PsdUridine_synth_RsuA/RluB_CS"/>
</dbReference>
<dbReference type="InterPro" id="IPR050343">
    <property type="entry name" value="RsuA_PseudoU_synthase"/>
</dbReference>
<dbReference type="InterPro" id="IPR002942">
    <property type="entry name" value="S4_RNA-bd"/>
</dbReference>
<dbReference type="InterPro" id="IPR036986">
    <property type="entry name" value="S4_RNA-bd_sf"/>
</dbReference>
<dbReference type="InterPro" id="IPR020094">
    <property type="entry name" value="TruA/RsuA/RluB/E/F_N"/>
</dbReference>
<dbReference type="NCBIfam" id="TIGR00093">
    <property type="entry name" value="pseudouridine synthase"/>
    <property type="match status" value="1"/>
</dbReference>
<dbReference type="PANTHER" id="PTHR47683">
    <property type="entry name" value="PSEUDOURIDINE SYNTHASE FAMILY PROTEIN-RELATED"/>
    <property type="match status" value="1"/>
</dbReference>
<dbReference type="PANTHER" id="PTHR47683:SF2">
    <property type="entry name" value="RNA-BINDING S4 DOMAIN-CONTAINING PROTEIN"/>
    <property type="match status" value="1"/>
</dbReference>
<dbReference type="Pfam" id="PF00849">
    <property type="entry name" value="PseudoU_synth_2"/>
    <property type="match status" value="1"/>
</dbReference>
<dbReference type="Pfam" id="PF01479">
    <property type="entry name" value="S4"/>
    <property type="match status" value="1"/>
</dbReference>
<dbReference type="SMART" id="SM00363">
    <property type="entry name" value="S4"/>
    <property type="match status" value="1"/>
</dbReference>
<dbReference type="SUPFAM" id="SSF55174">
    <property type="entry name" value="Alpha-L RNA-binding motif"/>
    <property type="match status" value="1"/>
</dbReference>
<dbReference type="SUPFAM" id="SSF55120">
    <property type="entry name" value="Pseudouridine synthase"/>
    <property type="match status" value="1"/>
</dbReference>
<dbReference type="PROSITE" id="PS01149">
    <property type="entry name" value="PSI_RSU"/>
    <property type="match status" value="1"/>
</dbReference>
<dbReference type="PROSITE" id="PS50889">
    <property type="entry name" value="S4"/>
    <property type="match status" value="1"/>
</dbReference>
<protein>
    <recommendedName>
        <fullName>Uncharacterized RNA pseudouridine synthase MT1751.1</fullName>
        <ecNumber>5.4.99.-</ecNumber>
    </recommendedName>
    <alternativeName>
        <fullName>RNA pseudouridylate synthase</fullName>
    </alternativeName>
    <alternativeName>
        <fullName>RNA-uridine isomerase</fullName>
    </alternativeName>
</protein>
<sequence>MMAEPEESREPRGIRLQKVLSQAGIASRRAAEKMIVDGRVEVDGHVVTELGTRVDPQVAVVRVDGARVVLDDSLVYLALNKPRGMHSTMSDDRGRPCIGDLIERKVRGTKKLFHVGRLDADTEGLMLLTNDGELAHRLMHPSHEVPKTYLATVTGSVPRGLGRTLRAGIELDDGPAFVDDFAVVDAIPGKTLVRVTLHEGRNRIVRRLLAAAGFPVEALVRTDIGAVSLGKQRPGSVRALRSNEIGQLYQAVGL</sequence>
<keyword id="KW-0413">Isomerase</keyword>
<keyword id="KW-1185">Reference proteome</keyword>
<keyword id="KW-0694">RNA-binding</keyword>
<reference key="1">
    <citation type="journal article" date="2002" name="J. Bacteriol.">
        <title>Whole-genome comparison of Mycobacterium tuberculosis clinical and laboratory strains.</title>
        <authorList>
            <person name="Fleischmann R.D."/>
            <person name="Alland D."/>
            <person name="Eisen J.A."/>
            <person name="Carpenter L."/>
            <person name="White O."/>
            <person name="Peterson J.D."/>
            <person name="DeBoy R.T."/>
            <person name="Dodson R.J."/>
            <person name="Gwinn M.L."/>
            <person name="Haft D.H."/>
            <person name="Hickey E.K."/>
            <person name="Kolonay J.F."/>
            <person name="Nelson W.C."/>
            <person name="Umayam L.A."/>
            <person name="Ermolaeva M.D."/>
            <person name="Salzberg S.L."/>
            <person name="Delcher A."/>
            <person name="Utterback T.R."/>
            <person name="Weidman J.F."/>
            <person name="Khouri H.M."/>
            <person name="Gill J."/>
            <person name="Mikula A."/>
            <person name="Bishai W."/>
            <person name="Jacobs W.R. Jr."/>
            <person name="Venter J.C."/>
            <person name="Fraser C.M."/>
        </authorList>
    </citation>
    <scope>NUCLEOTIDE SEQUENCE [LARGE SCALE GENOMIC DNA]</scope>
    <source>
        <strain>CDC 1551 / Oshkosh</strain>
    </source>
</reference>
<gene>
    <name type="ordered locus">MT1751.1</name>
</gene>
<comment type="catalytic activity">
    <reaction>
        <text>a uridine in RNA = a pseudouridine in RNA</text>
        <dbReference type="Rhea" id="RHEA:48348"/>
        <dbReference type="Rhea" id="RHEA-COMP:12068"/>
        <dbReference type="Rhea" id="RHEA-COMP:12069"/>
        <dbReference type="ChEBI" id="CHEBI:65314"/>
        <dbReference type="ChEBI" id="CHEBI:65315"/>
    </reaction>
</comment>
<comment type="similarity">
    <text evidence="3">Belongs to the pseudouridine synthase RsuA family.</text>
</comment>
<name>Y1711_MYCTO</name>
<evidence type="ECO:0000250" key="1"/>
<evidence type="ECO:0000255" key="2">
    <source>
        <dbReference type="PROSITE-ProRule" id="PRU00182"/>
    </source>
</evidence>
<evidence type="ECO:0000305" key="3"/>
<accession>P9WHQ0</accession>
<accession>L0T7P5</accession>
<accession>O33210</accession>
<accession>P65842</accession>
<organism>
    <name type="scientific">Mycobacterium tuberculosis (strain CDC 1551 / Oshkosh)</name>
    <dbReference type="NCBI Taxonomy" id="83331"/>
    <lineage>
        <taxon>Bacteria</taxon>
        <taxon>Bacillati</taxon>
        <taxon>Actinomycetota</taxon>
        <taxon>Actinomycetes</taxon>
        <taxon>Mycobacteriales</taxon>
        <taxon>Mycobacteriaceae</taxon>
        <taxon>Mycobacterium</taxon>
        <taxon>Mycobacterium tuberculosis complex</taxon>
    </lineage>
</organism>
<proteinExistence type="inferred from homology"/>
<feature type="chain" id="PRO_0000428146" description="Uncharacterized RNA pseudouridine synthase MT1751.1">
    <location>
        <begin position="1"/>
        <end position="254"/>
    </location>
</feature>
<feature type="domain" description="S4 RNA-binding" evidence="2">
    <location>
        <begin position="14"/>
        <end position="81"/>
    </location>
</feature>
<feature type="active site" description="Nucleophile" evidence="1">
    <location>
        <position position="119"/>
    </location>
</feature>